<feature type="chain" id="PRO_0000359158" description="Acetyl-coenzyme A carboxylase carboxyl transferase subunit beta, chloroplastic">
    <location>
        <begin position="1"/>
        <end position="484"/>
    </location>
</feature>
<feature type="domain" description="CoA carboxyltransferase N-terminal" evidence="3">
    <location>
        <begin position="223"/>
        <end position="484"/>
    </location>
</feature>
<feature type="zinc finger region" description="C4-type" evidence="2">
    <location>
        <begin position="227"/>
        <end position="246"/>
    </location>
</feature>
<feature type="binding site" evidence="2">
    <location>
        <position position="227"/>
    </location>
    <ligand>
        <name>Zn(2+)</name>
        <dbReference type="ChEBI" id="CHEBI:29105"/>
    </ligand>
</feature>
<feature type="binding site" evidence="2">
    <location>
        <position position="230"/>
    </location>
    <ligand>
        <name>Zn(2+)</name>
        <dbReference type="ChEBI" id="CHEBI:29105"/>
    </ligand>
</feature>
<feature type="binding site" evidence="2">
    <location>
        <position position="243"/>
    </location>
    <ligand>
        <name>Zn(2+)</name>
        <dbReference type="ChEBI" id="CHEBI:29105"/>
    </ligand>
</feature>
<feature type="binding site" evidence="2">
    <location>
        <position position="246"/>
    </location>
    <ligand>
        <name>Zn(2+)</name>
        <dbReference type="ChEBI" id="CHEBI:29105"/>
    </ligand>
</feature>
<proteinExistence type="inferred from homology"/>
<reference key="1">
    <citation type="submission" date="2007-03" db="EMBL/GenBank/DDBJ databases">
        <title>Sequence analysis of Arabidopsis pumila JS2 chloroplast DNA.</title>
        <authorList>
            <person name="Hosouchi T."/>
            <person name="Tsuruoka H."/>
            <person name="Kotani H."/>
        </authorList>
    </citation>
    <scope>NUCLEOTIDE SEQUENCE [LARGE SCALE GENOMIC DNA]</scope>
</reference>
<dbReference type="EC" id="2.1.3.15" evidence="2"/>
<dbReference type="EMBL" id="AP009368">
    <property type="protein sequence ID" value="BAF49948.1"/>
    <property type="molecule type" value="Genomic_DNA"/>
</dbReference>
<dbReference type="RefSeq" id="YP_001123124.1">
    <property type="nucleotide sequence ID" value="NC_009267.1"/>
</dbReference>
<dbReference type="SMR" id="A4QJU2"/>
<dbReference type="GeneID" id="4962368"/>
<dbReference type="UniPathway" id="UPA00655">
    <property type="reaction ID" value="UER00711"/>
</dbReference>
<dbReference type="GO" id="GO:0009317">
    <property type="term" value="C:acetyl-CoA carboxylase complex"/>
    <property type="evidence" value="ECO:0007669"/>
    <property type="project" value="InterPro"/>
</dbReference>
<dbReference type="GO" id="GO:0009570">
    <property type="term" value="C:chloroplast stroma"/>
    <property type="evidence" value="ECO:0007669"/>
    <property type="project" value="UniProtKB-SubCell"/>
</dbReference>
<dbReference type="GO" id="GO:0003989">
    <property type="term" value="F:acetyl-CoA carboxylase activity"/>
    <property type="evidence" value="ECO:0007669"/>
    <property type="project" value="InterPro"/>
</dbReference>
<dbReference type="GO" id="GO:0005524">
    <property type="term" value="F:ATP binding"/>
    <property type="evidence" value="ECO:0007669"/>
    <property type="project" value="UniProtKB-KW"/>
</dbReference>
<dbReference type="GO" id="GO:0016743">
    <property type="term" value="F:carboxyl- or carbamoyltransferase activity"/>
    <property type="evidence" value="ECO:0007669"/>
    <property type="project" value="UniProtKB-UniRule"/>
</dbReference>
<dbReference type="GO" id="GO:0008270">
    <property type="term" value="F:zinc ion binding"/>
    <property type="evidence" value="ECO:0007669"/>
    <property type="project" value="UniProtKB-UniRule"/>
</dbReference>
<dbReference type="GO" id="GO:0006633">
    <property type="term" value="P:fatty acid biosynthetic process"/>
    <property type="evidence" value="ECO:0007669"/>
    <property type="project" value="UniProtKB-KW"/>
</dbReference>
<dbReference type="GO" id="GO:2001295">
    <property type="term" value="P:malonyl-CoA biosynthetic process"/>
    <property type="evidence" value="ECO:0007669"/>
    <property type="project" value="UniProtKB-UniRule"/>
</dbReference>
<dbReference type="Gene3D" id="3.90.226.10">
    <property type="entry name" value="2-enoyl-CoA Hydratase, Chain A, domain 1"/>
    <property type="match status" value="1"/>
</dbReference>
<dbReference type="HAMAP" id="MF_01395">
    <property type="entry name" value="AcetylCoA_CT_beta"/>
    <property type="match status" value="1"/>
</dbReference>
<dbReference type="InterPro" id="IPR034733">
    <property type="entry name" value="AcCoA_carboxyl_beta"/>
</dbReference>
<dbReference type="InterPro" id="IPR000438">
    <property type="entry name" value="Acetyl_CoA_COase_Trfase_b_su"/>
</dbReference>
<dbReference type="InterPro" id="IPR029045">
    <property type="entry name" value="ClpP/crotonase-like_dom_sf"/>
</dbReference>
<dbReference type="InterPro" id="IPR011762">
    <property type="entry name" value="COA_CT_N"/>
</dbReference>
<dbReference type="NCBIfam" id="TIGR00515">
    <property type="entry name" value="accD"/>
    <property type="match status" value="1"/>
</dbReference>
<dbReference type="PANTHER" id="PTHR42995">
    <property type="entry name" value="ACETYL-COENZYME A CARBOXYLASE CARBOXYL TRANSFERASE SUBUNIT BETA, CHLOROPLASTIC"/>
    <property type="match status" value="1"/>
</dbReference>
<dbReference type="PANTHER" id="PTHR42995:SF5">
    <property type="entry name" value="ACETYL-COENZYME A CARBOXYLASE CARBOXYL TRANSFERASE SUBUNIT BETA, CHLOROPLASTIC"/>
    <property type="match status" value="1"/>
</dbReference>
<dbReference type="Pfam" id="PF01039">
    <property type="entry name" value="Carboxyl_trans"/>
    <property type="match status" value="1"/>
</dbReference>
<dbReference type="PRINTS" id="PR01070">
    <property type="entry name" value="ACCCTRFRASEB"/>
</dbReference>
<dbReference type="SUPFAM" id="SSF52096">
    <property type="entry name" value="ClpP/crotonase"/>
    <property type="match status" value="1"/>
</dbReference>
<dbReference type="PROSITE" id="PS50980">
    <property type="entry name" value="COA_CT_NTER"/>
    <property type="match status" value="1"/>
</dbReference>
<evidence type="ECO:0000250" key="1"/>
<evidence type="ECO:0000255" key="2">
    <source>
        <dbReference type="HAMAP-Rule" id="MF_01395"/>
    </source>
</evidence>
<evidence type="ECO:0000255" key="3">
    <source>
        <dbReference type="PROSITE-ProRule" id="PRU01136"/>
    </source>
</evidence>
<comment type="function">
    <text evidence="2">Component of the acetyl coenzyme A carboxylase (ACC) complex. Biotin carboxylase (BC) catalyzes the carboxylation of biotin on its carrier protein (BCCP) and then the CO(2) group is transferred by the transcarboxylase to acetyl-CoA to form malonyl-CoA.</text>
</comment>
<comment type="catalytic activity">
    <reaction evidence="2">
        <text>N(6)-carboxybiotinyl-L-lysyl-[protein] + acetyl-CoA = N(6)-biotinyl-L-lysyl-[protein] + malonyl-CoA</text>
        <dbReference type="Rhea" id="RHEA:54728"/>
        <dbReference type="Rhea" id="RHEA-COMP:10505"/>
        <dbReference type="Rhea" id="RHEA-COMP:10506"/>
        <dbReference type="ChEBI" id="CHEBI:57288"/>
        <dbReference type="ChEBI" id="CHEBI:57384"/>
        <dbReference type="ChEBI" id="CHEBI:83144"/>
        <dbReference type="ChEBI" id="CHEBI:83145"/>
        <dbReference type="EC" id="2.1.3.15"/>
    </reaction>
</comment>
<comment type="cofactor">
    <cofactor evidence="2">
        <name>Zn(2+)</name>
        <dbReference type="ChEBI" id="CHEBI:29105"/>
    </cofactor>
    <text evidence="2">Binds 1 zinc ion per subunit.</text>
</comment>
<comment type="pathway">
    <text evidence="2">Lipid metabolism; malonyl-CoA biosynthesis; malonyl-CoA from acetyl-CoA: step 1/1.</text>
</comment>
<comment type="subunit">
    <text evidence="1">Acetyl-CoA carboxylase is a heterohexamer composed of biotin carboxyl carrier protein, biotin carboxylase and 2 subunits each of ACCase subunit alpha and ACCase plastid-coded subunit beta (accD).</text>
</comment>
<comment type="subcellular location">
    <subcellularLocation>
        <location evidence="2">Plastid</location>
        <location evidence="2">Chloroplast stroma</location>
    </subcellularLocation>
</comment>
<comment type="similarity">
    <text evidence="2">Belongs to the AccD/PCCB family.</text>
</comment>
<accession>A4QJU2</accession>
<sequence length="484" mass="55135">MEKSWFNLMFSKGELEYRGELSKAMDSFAPSEKTTISKNRFIYDMDKNFYGWGERSSYSKNVDLLVSSKDIRNFISDDTFFVRDSNKNSYSIYFDIKKKFFEIDNDFSDLEFFFYSYCSSSYLNNSSKGDNDLHYDSYIKDTKYNCTNYIKSCIDSYFRSYICIDSNFLSDSNNSNESYIYNFICSESGKIRESKNYKIRTNRNRSNLISSKDFDITQNYNQLWIQCDNCYGLMYKKVKMNVCEQCGHYLKMMSSERIELSIDPGTWNPMDEDMVSADPIKFHSKEEPYKNRIDSAQKTTGLTDAVQTGTGQLNGIPVALGVMDFQFMGGSMGSVVGEKITRLIEYATNQRLPLILVCSSGGARMQEGSLSLMQMAKISSVLCDYQSSKKLFYISILTSPTTGGVTASFGMLGDIIIAEPYAYIAFAGKRVIEQTLKKAVPEGSQAAESLLRKGLLDAIVPRNLLKGVLSELFQLHAFFPLNKN</sequence>
<protein>
    <recommendedName>
        <fullName evidence="2">Acetyl-coenzyme A carboxylase carboxyl transferase subunit beta, chloroplastic</fullName>
        <shortName evidence="2">ACCase subunit beta</shortName>
        <shortName evidence="2">Acetyl-CoA carboxylase carboxyltransferase subunit beta</shortName>
        <ecNumber evidence="2">2.1.3.15</ecNumber>
    </recommendedName>
</protein>
<gene>
    <name evidence="2" type="primary">accD</name>
</gene>
<geneLocation type="chloroplast"/>
<name>ACCD_OLIPU</name>
<keyword id="KW-0067">ATP-binding</keyword>
<keyword id="KW-0150">Chloroplast</keyword>
<keyword id="KW-0275">Fatty acid biosynthesis</keyword>
<keyword id="KW-0276">Fatty acid metabolism</keyword>
<keyword id="KW-0444">Lipid biosynthesis</keyword>
<keyword id="KW-0443">Lipid metabolism</keyword>
<keyword id="KW-0479">Metal-binding</keyword>
<keyword id="KW-0547">Nucleotide-binding</keyword>
<keyword id="KW-0934">Plastid</keyword>
<keyword id="KW-0808">Transferase</keyword>
<keyword id="KW-0862">Zinc</keyword>
<keyword id="KW-0863">Zinc-finger</keyword>
<organism>
    <name type="scientific">Olimarabidopsis pumila</name>
    <name type="common">Dwarf rocket</name>
    <name type="synonym">Arabidopsis griffithiana</name>
    <dbReference type="NCBI Taxonomy" id="74718"/>
    <lineage>
        <taxon>Eukaryota</taxon>
        <taxon>Viridiplantae</taxon>
        <taxon>Streptophyta</taxon>
        <taxon>Embryophyta</taxon>
        <taxon>Tracheophyta</taxon>
        <taxon>Spermatophyta</taxon>
        <taxon>Magnoliopsida</taxon>
        <taxon>eudicotyledons</taxon>
        <taxon>Gunneridae</taxon>
        <taxon>Pentapetalae</taxon>
        <taxon>rosids</taxon>
        <taxon>malvids</taxon>
        <taxon>Brassicales</taxon>
        <taxon>Brassicaceae</taxon>
        <taxon>Alyssopsideae</taxon>
        <taxon>Olimarabidopsis</taxon>
    </lineage>
</organism>